<name>CYB_TETNG</name>
<geneLocation type="mitochondrion"/>
<protein>
    <recommendedName>
        <fullName>Cytochrome b</fullName>
    </recommendedName>
    <alternativeName>
        <fullName>Complex III subunit 3</fullName>
    </alternativeName>
    <alternativeName>
        <fullName>Complex III subunit III</fullName>
    </alternativeName>
    <alternativeName>
        <fullName>Cytochrome b-c1 complex subunit 3</fullName>
    </alternativeName>
    <alternativeName>
        <fullName>Ubiquinol-cytochrome-c reductase complex cytochrome b subunit</fullName>
    </alternativeName>
</protein>
<keyword id="KW-0249">Electron transport</keyword>
<keyword id="KW-0349">Heme</keyword>
<keyword id="KW-0408">Iron</keyword>
<keyword id="KW-0472">Membrane</keyword>
<keyword id="KW-0479">Metal-binding</keyword>
<keyword id="KW-0496">Mitochondrion</keyword>
<keyword id="KW-0999">Mitochondrion inner membrane</keyword>
<keyword id="KW-1185">Reference proteome</keyword>
<keyword id="KW-0679">Respiratory chain</keyword>
<keyword id="KW-0812">Transmembrane</keyword>
<keyword id="KW-1133">Transmembrane helix</keyword>
<keyword id="KW-0813">Transport</keyword>
<keyword id="KW-0830">Ubiquinone</keyword>
<organism>
    <name type="scientific">Tetraodon nigroviridis</name>
    <name type="common">Spotted green pufferfish</name>
    <name type="synonym">Chelonodon nigroviridis</name>
    <dbReference type="NCBI Taxonomy" id="99883"/>
    <lineage>
        <taxon>Eukaryota</taxon>
        <taxon>Metazoa</taxon>
        <taxon>Chordata</taxon>
        <taxon>Craniata</taxon>
        <taxon>Vertebrata</taxon>
        <taxon>Euteleostomi</taxon>
        <taxon>Actinopterygii</taxon>
        <taxon>Neopterygii</taxon>
        <taxon>Teleostei</taxon>
        <taxon>Neoteleostei</taxon>
        <taxon>Acanthomorphata</taxon>
        <taxon>Eupercaria</taxon>
        <taxon>Tetraodontiformes</taxon>
        <taxon>Tetradontoidea</taxon>
        <taxon>Tetraodontidae</taxon>
        <taxon>Tetraodon</taxon>
    </lineage>
</organism>
<proteinExistence type="inferred from homology"/>
<comment type="function">
    <text evidence="2">Component of the ubiquinol-cytochrome c reductase complex (complex III or cytochrome b-c1 complex) that is part of the mitochondrial respiratory chain. The b-c1 complex mediates electron transfer from ubiquinol to cytochrome c. Contributes to the generation of a proton gradient across the mitochondrial membrane that is then used for ATP synthesis.</text>
</comment>
<comment type="cofactor">
    <cofactor evidence="2">
        <name>heme b</name>
        <dbReference type="ChEBI" id="CHEBI:60344"/>
    </cofactor>
    <text evidence="2">Binds 2 heme b groups non-covalently.</text>
</comment>
<comment type="subunit">
    <text evidence="2">The cytochrome bc1 complex contains 3 respiratory subunits (MT-CYB, CYC1 and UQCRFS1), 2 core proteins (UQCRC1 and UQCRC2) and probably 6 low-molecular weight proteins.</text>
</comment>
<comment type="subcellular location">
    <subcellularLocation>
        <location evidence="2">Mitochondrion inner membrane</location>
        <topology evidence="2">Multi-pass membrane protein</topology>
    </subcellularLocation>
</comment>
<comment type="miscellaneous">
    <text evidence="1">Heme 1 (or BL or b562) is low-potential and absorbs at about 562 nm, and heme 2 (or BH or b566) is high-potential and absorbs at about 566 nm.</text>
</comment>
<comment type="similarity">
    <text evidence="3 4">Belongs to the cytochrome b family.</text>
</comment>
<comment type="caution">
    <text evidence="2">The full-length protein contains only eight transmembrane helices, not nine as predicted by bioinformatics tools.</text>
</comment>
<dbReference type="EMBL" id="DQ019313">
    <property type="protein sequence ID" value="AAY26163.1"/>
    <property type="molecule type" value="Genomic_DNA"/>
</dbReference>
<dbReference type="EMBL" id="AJ248546">
    <property type="protein sequence ID" value="CAB51151.1"/>
    <property type="molecule type" value="Genomic_DNA"/>
</dbReference>
<dbReference type="EMBL" id="AJ248547">
    <property type="protein sequence ID" value="CAB51152.1"/>
    <property type="molecule type" value="Genomic_DNA"/>
</dbReference>
<dbReference type="EMBL" id="AJ248548">
    <property type="protein sequence ID" value="CAB51153.1"/>
    <property type="molecule type" value="Genomic_DNA"/>
</dbReference>
<dbReference type="EMBL" id="AJ248549">
    <property type="protein sequence ID" value="CAB51154.1"/>
    <property type="molecule type" value="Genomic_DNA"/>
</dbReference>
<dbReference type="EMBL" id="AJ248550">
    <property type="protein sequence ID" value="CAB51155.1"/>
    <property type="molecule type" value="Genomic_DNA"/>
</dbReference>
<dbReference type="EMBL" id="AJ248556">
    <property type="protein sequence ID" value="CAB51156.1"/>
    <property type="molecule type" value="Genomic_DNA"/>
</dbReference>
<dbReference type="EMBL" id="AJ248558">
    <property type="protein sequence ID" value="CAB51157.1"/>
    <property type="molecule type" value="Genomic_DNA"/>
</dbReference>
<dbReference type="EMBL" id="AJ248559">
    <property type="protein sequence ID" value="CAB51158.1"/>
    <property type="molecule type" value="Genomic_DNA"/>
</dbReference>
<dbReference type="EMBL" id="AJ248560">
    <property type="protein sequence ID" value="CAB51159.1"/>
    <property type="molecule type" value="Genomic_DNA"/>
</dbReference>
<dbReference type="EMBL" id="AJ248561">
    <property type="protein sequence ID" value="CAB51160.1"/>
    <property type="molecule type" value="Genomic_DNA"/>
</dbReference>
<dbReference type="EMBL" id="AJ248562">
    <property type="protein sequence ID" value="CAB51161.1"/>
    <property type="molecule type" value="Genomic_DNA"/>
</dbReference>
<dbReference type="EMBL" id="AJ248563">
    <property type="protein sequence ID" value="CAB51162.1"/>
    <property type="molecule type" value="Genomic_DNA"/>
</dbReference>
<dbReference type="EMBL" id="AJ248564">
    <property type="protein sequence ID" value="CAB51163.1"/>
    <property type="molecule type" value="Genomic_DNA"/>
</dbReference>
<dbReference type="EMBL" id="AJ248565">
    <property type="protein sequence ID" value="CAB51164.1"/>
    <property type="molecule type" value="Genomic_DNA"/>
</dbReference>
<dbReference type="EMBL" id="AJ248566">
    <property type="protein sequence ID" value="CAB51165.1"/>
    <property type="molecule type" value="Genomic_DNA"/>
</dbReference>
<dbReference type="EMBL" id="AJ248567">
    <property type="protein sequence ID" value="CAB51166.1"/>
    <property type="molecule type" value="Genomic_DNA"/>
</dbReference>
<dbReference type="EMBL" id="AJ248568">
    <property type="protein sequence ID" value="CAB51167.1"/>
    <property type="molecule type" value="Genomic_DNA"/>
</dbReference>
<dbReference type="SMR" id="Q4JQH5"/>
<dbReference type="FunCoup" id="Q4JQH5">
    <property type="interactions" value="20"/>
</dbReference>
<dbReference type="STRING" id="99883.ENSTNIP00000007009"/>
<dbReference type="Ensembl" id="ENSTNIT00000007164.1">
    <property type="protein sequence ID" value="ENSTNIP00000007009.1"/>
    <property type="gene ID" value="ENSTNIG00000004374.1"/>
</dbReference>
<dbReference type="GeneTree" id="ENSGT00390000017948"/>
<dbReference type="HOGENOM" id="CLU_031114_3_0_1"/>
<dbReference type="InParanoid" id="Q4JQH5"/>
<dbReference type="OMA" id="NISAWWN"/>
<dbReference type="TreeFam" id="TF353088"/>
<dbReference type="Proteomes" id="UP000007303">
    <property type="component" value="Mitochondrion"/>
</dbReference>
<dbReference type="GO" id="GO:0005743">
    <property type="term" value="C:mitochondrial inner membrane"/>
    <property type="evidence" value="ECO:0007669"/>
    <property type="project" value="UniProtKB-SubCell"/>
</dbReference>
<dbReference type="GO" id="GO:0045275">
    <property type="term" value="C:respiratory chain complex III"/>
    <property type="evidence" value="ECO:0007669"/>
    <property type="project" value="InterPro"/>
</dbReference>
<dbReference type="GO" id="GO:0046872">
    <property type="term" value="F:metal ion binding"/>
    <property type="evidence" value="ECO:0007669"/>
    <property type="project" value="UniProtKB-KW"/>
</dbReference>
<dbReference type="GO" id="GO:0008121">
    <property type="term" value="F:ubiquinol-cytochrome-c reductase activity"/>
    <property type="evidence" value="ECO:0007669"/>
    <property type="project" value="InterPro"/>
</dbReference>
<dbReference type="GO" id="GO:0006122">
    <property type="term" value="P:mitochondrial electron transport, ubiquinol to cytochrome c"/>
    <property type="evidence" value="ECO:0007669"/>
    <property type="project" value="TreeGrafter"/>
</dbReference>
<dbReference type="CDD" id="cd00290">
    <property type="entry name" value="cytochrome_b_C"/>
    <property type="match status" value="1"/>
</dbReference>
<dbReference type="CDD" id="cd00284">
    <property type="entry name" value="Cytochrome_b_N"/>
    <property type="match status" value="1"/>
</dbReference>
<dbReference type="FunFam" id="1.20.810.10:FF:000002">
    <property type="entry name" value="Cytochrome b"/>
    <property type="match status" value="1"/>
</dbReference>
<dbReference type="Gene3D" id="1.20.810.10">
    <property type="entry name" value="Cytochrome Bc1 Complex, Chain C"/>
    <property type="match status" value="1"/>
</dbReference>
<dbReference type="InterPro" id="IPR005798">
    <property type="entry name" value="Cyt_b/b6_C"/>
</dbReference>
<dbReference type="InterPro" id="IPR036150">
    <property type="entry name" value="Cyt_b/b6_C_sf"/>
</dbReference>
<dbReference type="InterPro" id="IPR005797">
    <property type="entry name" value="Cyt_b/b6_N"/>
</dbReference>
<dbReference type="InterPro" id="IPR027387">
    <property type="entry name" value="Cytb/b6-like_sf"/>
</dbReference>
<dbReference type="InterPro" id="IPR030689">
    <property type="entry name" value="Cytochrome_b"/>
</dbReference>
<dbReference type="InterPro" id="IPR048260">
    <property type="entry name" value="Cytochrome_b_C_euk/bac"/>
</dbReference>
<dbReference type="InterPro" id="IPR048259">
    <property type="entry name" value="Cytochrome_b_N_euk/bac"/>
</dbReference>
<dbReference type="InterPro" id="IPR016174">
    <property type="entry name" value="Di-haem_cyt_TM"/>
</dbReference>
<dbReference type="PANTHER" id="PTHR19271">
    <property type="entry name" value="CYTOCHROME B"/>
    <property type="match status" value="1"/>
</dbReference>
<dbReference type="PANTHER" id="PTHR19271:SF16">
    <property type="entry name" value="CYTOCHROME B"/>
    <property type="match status" value="1"/>
</dbReference>
<dbReference type="Pfam" id="PF00032">
    <property type="entry name" value="Cytochrom_B_C"/>
    <property type="match status" value="1"/>
</dbReference>
<dbReference type="Pfam" id="PF00033">
    <property type="entry name" value="Cytochrome_B"/>
    <property type="match status" value="1"/>
</dbReference>
<dbReference type="PIRSF" id="PIRSF038885">
    <property type="entry name" value="COB"/>
    <property type="match status" value="1"/>
</dbReference>
<dbReference type="SUPFAM" id="SSF81648">
    <property type="entry name" value="a domain/subunit of cytochrome bc1 complex (Ubiquinol-cytochrome c reductase)"/>
    <property type="match status" value="1"/>
</dbReference>
<dbReference type="SUPFAM" id="SSF81342">
    <property type="entry name" value="Transmembrane di-heme cytochromes"/>
    <property type="match status" value="1"/>
</dbReference>
<dbReference type="PROSITE" id="PS51003">
    <property type="entry name" value="CYTB_CTER"/>
    <property type="match status" value="1"/>
</dbReference>
<dbReference type="PROSITE" id="PS51002">
    <property type="entry name" value="CYTB_NTER"/>
    <property type="match status" value="1"/>
</dbReference>
<evidence type="ECO:0000250" key="1"/>
<evidence type="ECO:0000250" key="2">
    <source>
        <dbReference type="UniProtKB" id="P00157"/>
    </source>
</evidence>
<evidence type="ECO:0000255" key="3">
    <source>
        <dbReference type="PROSITE-ProRule" id="PRU00967"/>
    </source>
</evidence>
<evidence type="ECO:0000255" key="4">
    <source>
        <dbReference type="PROSITE-ProRule" id="PRU00968"/>
    </source>
</evidence>
<evidence type="ECO:0000269" key="5">
    <source ref="2"/>
</evidence>
<reference key="1">
    <citation type="journal article" date="2006" name="DNA Seq.">
        <title>The complete nucleotide sequence of the mitochondrial genome of Tetraodon nigroviridis.</title>
        <authorList>
            <person name="Yue G.H."/>
            <person name="Lo L.C."/>
            <person name="Zhu Z.Y."/>
            <person name="Lin G."/>
            <person name="Feng F."/>
        </authorList>
    </citation>
    <scope>NUCLEOTIDE SEQUENCE [LARGE SCALE GENOMIC DNA]</scope>
</reference>
<reference key="2">
    <citation type="submission" date="1999-07" db="EMBL/GenBank/DDBJ databases">
        <title>Evolutionary relationships and discrimination between T. nigroviridis and T. fluviatilis at the molecular level.</title>
        <authorList>
            <person name="Fischer C."/>
            <person name="Bouneau L."/>
            <person name="Roest Crollius H."/>
            <person name="Quetier F."/>
            <person name="Weissenbach J."/>
            <person name="Bernot A."/>
        </authorList>
    </citation>
    <scope>NUCLEOTIDE SEQUENCE [GENOMIC DNA] OF 33-134</scope>
    <scope>VARIANT ILE-42</scope>
</reference>
<sequence>MASLRKTHPLMKIANDMVVDLPTPSNISAWWNFGSLLGLCLVAQILTGLFLAMHYTSDIATAFSSVAHICRDVNYGWLIRNLHANGASFFFICLYLHIGRGLYYGSYLQKETWNIGVVLLLLVMATAFVGYVLPWGQMSFWGATVITNLLSAVPYVGNTLVQWVWGGFSVDHATLTRFFAFHFLLPFIVAAAVIVHLIFLHETGSNNPLGLNSDTDKIPFHPYFSYKDLIGFTVLLTTLTMLALFSPNYLGDPDNFTPANPLVTPAHIKPEWYFLFAYAILRSIPNKLGGVLALLASILRLMEVPLLHTSKKRKPYFSDPLTNFLFWTLIGRMWPSSPESEACLVEHPYVIIGQAASILYFSLFLVLMPAAGWLENKTLQ</sequence>
<feature type="chain" id="PRO_0000061655" description="Cytochrome b">
    <location>
        <begin position="1"/>
        <end position="380"/>
    </location>
</feature>
<feature type="transmembrane region" description="Helical" evidence="2">
    <location>
        <begin position="33"/>
        <end position="53"/>
    </location>
</feature>
<feature type="transmembrane region" description="Helical" evidence="2">
    <location>
        <begin position="77"/>
        <end position="98"/>
    </location>
</feature>
<feature type="transmembrane region" description="Helical" evidence="2">
    <location>
        <begin position="113"/>
        <end position="133"/>
    </location>
</feature>
<feature type="transmembrane region" description="Helical" evidence="2">
    <location>
        <begin position="178"/>
        <end position="198"/>
    </location>
</feature>
<feature type="transmembrane region" description="Helical" evidence="2">
    <location>
        <begin position="226"/>
        <end position="246"/>
    </location>
</feature>
<feature type="transmembrane region" description="Helical" evidence="2">
    <location>
        <begin position="288"/>
        <end position="308"/>
    </location>
</feature>
<feature type="transmembrane region" description="Helical" evidence="2">
    <location>
        <begin position="321"/>
        <end position="342"/>
    </location>
</feature>
<feature type="transmembrane region" description="Helical" evidence="2">
    <location>
        <begin position="349"/>
        <end position="369"/>
    </location>
</feature>
<feature type="binding site" description="axial binding residue" evidence="2">
    <location>
        <position position="83"/>
    </location>
    <ligand>
        <name>heme b</name>
        <dbReference type="ChEBI" id="CHEBI:60344"/>
        <label>b562</label>
    </ligand>
    <ligandPart>
        <name>Fe</name>
        <dbReference type="ChEBI" id="CHEBI:18248"/>
    </ligandPart>
</feature>
<feature type="binding site" description="axial binding residue" evidence="2">
    <location>
        <position position="97"/>
    </location>
    <ligand>
        <name>heme b</name>
        <dbReference type="ChEBI" id="CHEBI:60344"/>
        <label>b566</label>
    </ligand>
    <ligandPart>
        <name>Fe</name>
        <dbReference type="ChEBI" id="CHEBI:18248"/>
    </ligandPart>
</feature>
<feature type="binding site" description="axial binding residue" evidence="2">
    <location>
        <position position="182"/>
    </location>
    <ligand>
        <name>heme b</name>
        <dbReference type="ChEBI" id="CHEBI:60344"/>
        <label>b562</label>
    </ligand>
    <ligandPart>
        <name>Fe</name>
        <dbReference type="ChEBI" id="CHEBI:18248"/>
    </ligandPart>
</feature>
<feature type="binding site" description="axial binding residue" evidence="2">
    <location>
        <position position="196"/>
    </location>
    <ligand>
        <name>heme b</name>
        <dbReference type="ChEBI" id="CHEBI:60344"/>
        <label>b566</label>
    </ligand>
    <ligandPart>
        <name>Fe</name>
        <dbReference type="ChEBI" id="CHEBI:18248"/>
    </ligandPart>
</feature>
<feature type="binding site" evidence="2">
    <location>
        <position position="201"/>
    </location>
    <ligand>
        <name>a ubiquinone</name>
        <dbReference type="ChEBI" id="CHEBI:16389"/>
    </ligand>
</feature>
<feature type="sequence variant" evidence="5">
    <original>V</original>
    <variation>I</variation>
    <location>
        <position position="42"/>
    </location>
</feature>
<accession>Q4JQH5</accession>
<accession>Q9T3U3</accession>
<accession>Q9TEC9</accession>
<accession>Q9XMK8</accession>
<gene>
    <name type="primary">mt-cyb</name>
    <name type="synonym">cob</name>
    <name type="synonym">cytb</name>
    <name type="synonym">mtcyb</name>
</gene>